<dbReference type="EC" id="2.6.1.21"/>
<dbReference type="EMBL" id="U26947">
    <property type="protein sequence ID" value="AAB50428.1"/>
    <property type="molecule type" value="Genomic_DNA"/>
</dbReference>
<dbReference type="SMR" id="P54692"/>
<dbReference type="PATRIC" id="fig|1402.64.peg.1229"/>
<dbReference type="GO" id="GO:0005829">
    <property type="term" value="C:cytosol"/>
    <property type="evidence" value="ECO:0007669"/>
    <property type="project" value="TreeGrafter"/>
</dbReference>
<dbReference type="GO" id="GO:0047810">
    <property type="term" value="F:D-alanine-2-oxoglutarate aminotransferase activity"/>
    <property type="evidence" value="ECO:0000250"/>
    <property type="project" value="UniProtKB"/>
</dbReference>
<dbReference type="GO" id="GO:0030170">
    <property type="term" value="F:pyridoxal phosphate binding"/>
    <property type="evidence" value="ECO:0000250"/>
    <property type="project" value="UniProtKB"/>
</dbReference>
<dbReference type="GO" id="GO:0046437">
    <property type="term" value="P:D-amino acid biosynthetic process"/>
    <property type="evidence" value="ECO:0000250"/>
    <property type="project" value="UniProtKB"/>
</dbReference>
<dbReference type="GO" id="GO:0019478">
    <property type="term" value="P:D-amino acid catabolic process"/>
    <property type="evidence" value="ECO:0000250"/>
    <property type="project" value="UniProtKB"/>
</dbReference>
<dbReference type="CDD" id="cd01558">
    <property type="entry name" value="D-AAT_like"/>
    <property type="match status" value="1"/>
</dbReference>
<dbReference type="FunFam" id="3.20.10.10:FF:000002">
    <property type="entry name" value="D-alanine aminotransferase"/>
    <property type="match status" value="1"/>
</dbReference>
<dbReference type="FunFam" id="3.30.470.10:FF:000009">
    <property type="entry name" value="D-alanine aminotransferase"/>
    <property type="match status" value="1"/>
</dbReference>
<dbReference type="Gene3D" id="3.30.470.10">
    <property type="match status" value="1"/>
</dbReference>
<dbReference type="Gene3D" id="3.20.10.10">
    <property type="entry name" value="D-amino Acid Aminotransferase, subunit A, domain 2"/>
    <property type="match status" value="1"/>
</dbReference>
<dbReference type="InterPro" id="IPR001544">
    <property type="entry name" value="Aminotrans_IV"/>
</dbReference>
<dbReference type="InterPro" id="IPR018300">
    <property type="entry name" value="Aminotrans_IV_CS"/>
</dbReference>
<dbReference type="InterPro" id="IPR036038">
    <property type="entry name" value="Aminotransferase-like"/>
</dbReference>
<dbReference type="InterPro" id="IPR043132">
    <property type="entry name" value="BCAT-like_C"/>
</dbReference>
<dbReference type="InterPro" id="IPR043131">
    <property type="entry name" value="BCAT-like_N"/>
</dbReference>
<dbReference type="InterPro" id="IPR050571">
    <property type="entry name" value="Class-IV_PLP-Dep_Aminotrnsfr"/>
</dbReference>
<dbReference type="InterPro" id="IPR005784">
    <property type="entry name" value="D_amino_transT"/>
</dbReference>
<dbReference type="NCBIfam" id="TIGR01121">
    <property type="entry name" value="D_amino_aminoT"/>
    <property type="match status" value="1"/>
</dbReference>
<dbReference type="PANTHER" id="PTHR42743">
    <property type="entry name" value="AMINO-ACID AMINOTRANSFERASE"/>
    <property type="match status" value="1"/>
</dbReference>
<dbReference type="PANTHER" id="PTHR42743:SF10">
    <property type="entry name" value="D-ALANINE AMINOTRANSFERASE"/>
    <property type="match status" value="1"/>
</dbReference>
<dbReference type="Pfam" id="PF01063">
    <property type="entry name" value="Aminotran_4"/>
    <property type="match status" value="1"/>
</dbReference>
<dbReference type="SUPFAM" id="SSF56752">
    <property type="entry name" value="D-aminoacid aminotransferase-like PLP-dependent enzymes"/>
    <property type="match status" value="1"/>
</dbReference>
<dbReference type="PROSITE" id="PS00770">
    <property type="entry name" value="AA_TRANSFER_CLASS_4"/>
    <property type="match status" value="1"/>
</dbReference>
<evidence type="ECO:0000250" key="1"/>
<evidence type="ECO:0000250" key="2">
    <source>
        <dbReference type="UniProtKB" id="P19938"/>
    </source>
</evidence>
<evidence type="ECO:0000305" key="3"/>
<comment type="function">
    <text evidence="1">Acts on the D-isomers of alanine, leucine, aspartate, glutamate, aminobutyrate, norvaline and asparagine. The enzyme transfers an amino group from a substrate D-amino acid to the pyridoxal phosphate cofactor to form pyridoxamine and an alpha-keto acid in the first half-reaction. The second half-reaction is the reverse of the first, transferring the amino group from the pyridoxamine to a second alpha-keto acid to form the product D-amino acid via a ping-pong mechanism. This is an important process in the formation of D-alanine and D-glutamate, which are essential bacterial cell wall components (By similarity).</text>
</comment>
<comment type="catalytic activity">
    <reaction>
        <text>D-alanine + 2-oxoglutarate = D-glutamate + pyruvate</text>
        <dbReference type="Rhea" id="RHEA:15869"/>
        <dbReference type="ChEBI" id="CHEBI:15361"/>
        <dbReference type="ChEBI" id="CHEBI:16810"/>
        <dbReference type="ChEBI" id="CHEBI:29986"/>
        <dbReference type="ChEBI" id="CHEBI:57416"/>
        <dbReference type="EC" id="2.6.1.21"/>
    </reaction>
</comment>
<comment type="cofactor">
    <cofactor evidence="1">
        <name>pyridoxal 5'-phosphate</name>
        <dbReference type="ChEBI" id="CHEBI:597326"/>
    </cofactor>
</comment>
<comment type="subunit">
    <text evidence="1">Homodimer.</text>
</comment>
<comment type="similarity">
    <text evidence="3">Belongs to the class-IV pyridoxal-phosphate-dependent aminotransferase family.</text>
</comment>
<proteinExistence type="inferred from homology"/>
<keyword id="KW-0032">Aminotransferase</keyword>
<keyword id="KW-0663">Pyridoxal phosphate</keyword>
<keyword id="KW-0808">Transferase</keyword>
<protein>
    <recommendedName>
        <fullName>D-alanine aminotransferase</fullName>
        <ecNumber>2.6.1.21</ecNumber>
    </recommendedName>
    <alternativeName>
        <fullName>D-amino acid aminotransferase</fullName>
    </alternativeName>
    <alternativeName>
        <fullName>D-amino acid transaminase</fullName>
        <shortName>DAAT</shortName>
    </alternativeName>
    <alternativeName>
        <fullName>D-aspartate aminotransferase</fullName>
    </alternativeName>
</protein>
<reference key="1">
    <citation type="journal article" date="1997" name="Biochim. Biophys. Acta">
        <title>Nucleotide sequence of the Bacillus licheniformis ATCC 10716 dat gene and comparison of the predicted amino acid sequence with those of other bacterial species.</title>
        <authorList>
            <person name="Taylor P.P."/>
            <person name="Fotheringham I.G."/>
        </authorList>
    </citation>
    <scope>NUCLEOTIDE SEQUENCE [GENOMIC DNA]</scope>
    <source>
        <strain>ATCC 10716 / DSM 603 / NBRC 12199 / NCIMB 8874 / Tracy I</strain>
    </source>
</reference>
<organism>
    <name type="scientific">Bacillus licheniformis</name>
    <dbReference type="NCBI Taxonomy" id="1402"/>
    <lineage>
        <taxon>Bacteria</taxon>
        <taxon>Bacillati</taxon>
        <taxon>Bacillota</taxon>
        <taxon>Bacilli</taxon>
        <taxon>Bacillales</taxon>
        <taxon>Bacillaceae</taxon>
        <taxon>Bacillus</taxon>
    </lineage>
</organism>
<gene>
    <name type="primary">dat</name>
</gene>
<name>DAAA_BACLI</name>
<accession>P54692</accession>
<feature type="chain" id="PRO_0000103246" description="D-alanine aminotransferase">
    <location>
        <begin position="1"/>
        <end position="283"/>
    </location>
</feature>
<feature type="active site" description="Proton acceptor" evidence="2">
    <location>
        <position position="144"/>
    </location>
</feature>
<feature type="binding site" evidence="2">
    <location>
        <position position="31"/>
    </location>
    <ligand>
        <name>substrate</name>
    </ligand>
</feature>
<feature type="binding site" evidence="2">
    <location>
        <position position="50"/>
    </location>
    <ligand>
        <name>pyridoxal 5'-phosphate</name>
        <dbReference type="ChEBI" id="CHEBI:597326"/>
    </ligand>
</feature>
<feature type="binding site" evidence="2">
    <location>
        <position position="98"/>
    </location>
    <ligand>
        <name>substrate</name>
    </ligand>
</feature>
<feature type="binding site" evidence="2">
    <location>
        <position position="100"/>
    </location>
    <ligand>
        <name>substrate</name>
    </ligand>
</feature>
<feature type="binding site" evidence="2">
    <location>
        <position position="176"/>
    </location>
    <ligand>
        <name>pyridoxal 5'-phosphate</name>
        <dbReference type="ChEBI" id="CHEBI:597326"/>
    </ligand>
</feature>
<feature type="modified residue" description="N6-(pyridoxal phosphate)lysine" evidence="2">
    <location>
        <position position="144"/>
    </location>
</feature>
<sequence>MKVLFNGRLMERSECAVDIEDRGYQFGDGVYEVIRIYNGILFTLDEHIARLYKSAAEIGIDLSFSEAELKSQLKELVDINQRRDGGLYLQVTRGKAPRKHQYGAGLTPQVTAYTFPIQKPEKEQQNGVSAITADDMRWLRCDIKSLNLLYNVMIKQKAQEASAFEAILIRDGLVTEGTSSNVYVAKQNVIYTHPVTTLILNGITRMKVLQLCEENGLNYEEKAVTKDELLNADEVFITSTTAEVIPVTSIDGQTIGSGAPGPLTKNVQTALQNSILSETAKTV</sequence>